<sequence>MGMACLTMTEMEGTSTSPVHQNGDIPGNANSVKQIDPVLQVYLYHSLGKAEGDYLKFPAGEYVAEEICVAASKACGITPVYHSMFALMNETERIWYPPNHVFHVDESTRHNVLYRIRFYFPYWYCNGSNRTYRHGISRGAEAPLLDDFVMSYLFAQWRHDFLYGWVKIPVTHETQEECLGMAVLDMMRIAKEKDQTPLDIYSSVSYKTFLPKCVRAKIQDYHILTRKRIRYRFRRFIEQFSHCKATARNLKLKYLINLETLQSAFYTEQFEVKEPGRGPSGEEIFATIIITGNGGIQWSRGKHKESETLTEQDLQLYCDFPDIIDVSIKQANQEGSNESRIVTIHKQDGKSLEIELSSLREALSFVSLIDGYYRLTADAHHYLCKEVAPPMVLENIQSNCHGPISMDFAISKLKKAGNQTGLFVLRCSPKDFNKYFLTFAVERENVTEYKHCLITKNENGEYNLSGTRKNFSNLKDLLNCYQMETVRSDSIIFQFTKCCPPKPKDKSNLLVFRTNGISDVPTSPTLQRHNNVNQMVFHKIRNEDLIFNESLGQGTFTKIFKGVRREVGDYGQLHETEVLLKVLDKAHRNYSESFFEAASMMSQLSHKHLVLNYGVCVCGEENILVQEFVKFGSLDTYLKKNKNSINILWKLEVAKQLAWAMHFLEEKTLIHGNVCAKNILLIREEDRKTGNPPFIKLSDPGISITVLPKDILQERIPWVPPECIENPKNLNLATDKWSFGTTLWEICSGGDKPLNALDSQRKLQFYEDRHQLPAPKWTELANLINNCMDYEPDFRPSFRAIIRDLNSLFTPDYELLTENDMLPNMRIGALGFSGAFEDRDPTQFEERHLKFLQQLGKGNFGSVEMCRYDPLQDNTGEVVAVKKLQHSTEEHLRDFEREIEILKSLQHDNIVKYKGVCYSAGRRNLRLIMEYLPYGSLRDYLQKHKERIDHKKLLQYTSQICKGMEYLGTKRYIHRDLATRNILVENENRVKIGDFGLTKVLPQDKEYYKVKEPGESPIFWYAPESLTESKFSVASDVWSFGVVLYELFTYIEKSKSPPAEFMRMIGNDKQGQMIVFHLIELLKNNGRLPRPDGCPDEIYIIMTECWNNNVNQRPSFRDLALRVDQIRDSMA</sequence>
<protein>
    <recommendedName>
        <fullName evidence="2">Tyrosine-protein kinase JAK2</fullName>
        <ecNumber evidence="2">2.7.10.2</ecNumber>
    </recommendedName>
    <alternativeName>
        <fullName>Janus kinase 2</fullName>
        <shortName>JAK-2</shortName>
    </alternativeName>
</protein>
<comment type="function">
    <text evidence="2">Non-receptor tyrosine kinase involved in various processes such as cell growth, development, differentiation or histone modifications. Mediates essential signaling events in both innate and adaptive immunity. In the cytoplasm, plays a pivotal role in signal transduction via its association with type I receptors such as growth hormone (GHR), prolactin (PRLR), leptin (LEPR), erythropoietin (EPOR), thrombopoietin (THPO); or type II receptors including IFN-alpha, IFN-beta, IFN-gamma and multiple interleukins. Following ligand-binding to cell surface receptors, phosphorylates specific tyrosine residues on the cytoplasmic tails of the receptor, creating docking sites for STATs proteins. Subsequently, phosphorylates the STATs proteins once they are recruited to the receptor. Phosphorylated STATs then form homodimer or heterodimers and translocate to the nucleus to activate gene transcription. For example, cell stimulation with erythropoietin (EPO) during erythropoiesis leads to JAK2 autophosphorylation, activation, and its association with erythropoietin receptor (EPOR) that becomes phosphorylated in its cytoplasmic domain. Then, STAT5 (STAT5A or STAT5B) is recruited, phosphorylated and activated by JAK2. Once activated, dimerized STAT5 translocates into the nucleus and promotes the transcription of several essential genes involved in the modulation of erythropoiesis. Part of a signaling cascade that is activated by increased cellular retinol and that leads to the activation of STAT5 (STAT5A or STAT5B). In addition, JAK2 mediates angiotensin-2-induced ARHGEF1 phosphorylation. Plays a role in cell cycle by phosphorylating CDKN1B. Cooperates with TEC through reciprocal phosphorylation to mediate cytokine-driven activation of FOS transcription. In the nucleus, plays a key role in chromatin by specifically mediating phosphorylation of 'Tyr-41' of histone H3 (H3Y41ph), a specific tag that promotes exclusion of CBX5 (HP1 alpha) from chromatin. Up-regulates the potassium voltage-gated channel activity of KCNA3.</text>
</comment>
<comment type="catalytic activity">
    <reaction evidence="7">
        <text>L-tyrosyl-[protein] + ATP = O-phospho-L-tyrosyl-[protein] + ADP + H(+)</text>
        <dbReference type="Rhea" id="RHEA:10596"/>
        <dbReference type="Rhea" id="RHEA-COMP:10136"/>
        <dbReference type="Rhea" id="RHEA-COMP:20101"/>
        <dbReference type="ChEBI" id="CHEBI:15378"/>
        <dbReference type="ChEBI" id="CHEBI:30616"/>
        <dbReference type="ChEBI" id="CHEBI:46858"/>
        <dbReference type="ChEBI" id="CHEBI:61978"/>
        <dbReference type="ChEBI" id="CHEBI:456216"/>
        <dbReference type="EC" id="2.7.10.2"/>
    </reaction>
</comment>
<comment type="cofactor">
    <cofactor evidence="8">
        <name>Mg(2+)</name>
        <dbReference type="ChEBI" id="CHEBI:18420"/>
    </cofactor>
    <text evidence="8">Mn(2+) was used in the in vitro kinase assay but Mg(2+) is likely to be the in vivo cofactor.</text>
</comment>
<comment type="activity regulation">
    <text evidence="2 3">Regulated by autophosphorylation, can both activate or decrease activity. Heme regulates its activity by enhancing the phosphorylation on Tyr-1007 and Tyr-1008.</text>
</comment>
<comment type="subunit">
    <text evidence="2 3">Interacts with IL23R, SKB1 and STAM2 (By similarity). Interacts with EPOR. Interacts with LYN. Interacts with SIRPA. Interacts with SH2B1. Interacts with TEC (By similarity). Interacts with IFNGR2 (via intracellular domain) (By similarity). Interacts with LEPR (Isoform B) (By similarity). Interacts with HSP90AB1; promotes functional activation in a heat shock-dependent manner. Interacts with STRA6 (By similarity). Interacts with ASB2; the interaction targets JAK2 for Notch-induced proteasomal degradation (By similarity).</text>
</comment>
<comment type="subcellular location">
    <subcellularLocation>
        <location evidence="1">Endomembrane system</location>
        <topology evidence="1">Peripheral membrane protein</topology>
    </subcellularLocation>
    <subcellularLocation>
        <location evidence="1">Cytoplasm</location>
    </subcellularLocation>
    <subcellularLocation>
        <location evidence="1">Nucleus</location>
    </subcellularLocation>
</comment>
<comment type="domain">
    <text evidence="1">The N-terminal domain of JAKs mediates their interaction with cytokine/interferon/growth hormone receptors. Possesses 2 protein kinase domains. The second one probably contains the catalytic domain, while the presence of slight differences suggest a different role for protein kinase 1 (By similarity).</text>
</comment>
<comment type="PTM">
    <text evidence="2 3">Autophosphorylated, leading to regulate its activity. Leptin promotes phosphorylation on tyrosine residues, including phosphorylation on Tyr-813. Autophosphorylation on Tyr-119 in response to EPO down-regulates its kinase activity. Autophosphorylation on Tyr-868, Tyr-966 and Tyr-972 in response to growth hormone (GH) are required for maximal kinase activity. Also phosphorylated by TEC (By similarity). Phosphorylated on tyrosine residues in response to interferon gamma signaling. Phosphorylated on tyrosine residues in response to a signaling cascade that is activated by increased cellular retinol (By similarity).</text>
</comment>
<comment type="PTM">
    <text evidence="2">Undergoes Notch-induced ubiquitination and subsequent proteasomal degradation which is mediated by ASB1 or ASB2, the substrate-recognition components of probable ECS E3 ubiquitin-protein ligase complexes.</text>
</comment>
<comment type="similarity">
    <text evidence="5">Belongs to the protein kinase superfamily. Tyr protein kinase family. JAK subfamily.</text>
</comment>
<dbReference type="EC" id="2.7.10.2" evidence="2"/>
<dbReference type="EMBL" id="AB006011">
    <property type="protein sequence ID" value="BAA21662.1"/>
    <property type="molecule type" value="mRNA"/>
</dbReference>
<dbReference type="RefSeq" id="NP_999278.1">
    <property type="nucleotide sequence ID" value="NM_214113.1"/>
</dbReference>
<dbReference type="RefSeq" id="XP_020938458.1">
    <property type="nucleotide sequence ID" value="XM_021082799.1"/>
</dbReference>
<dbReference type="RefSeq" id="XP_020938461.1">
    <property type="nucleotide sequence ID" value="XM_021082802.1"/>
</dbReference>
<dbReference type="RefSeq" id="XP_020938465.1">
    <property type="nucleotide sequence ID" value="XM_021082806.1"/>
</dbReference>
<dbReference type="SMR" id="O19064"/>
<dbReference type="FunCoup" id="O19064">
    <property type="interactions" value="1231"/>
</dbReference>
<dbReference type="STRING" id="9823.ENSSSCP00000029236"/>
<dbReference type="PaxDb" id="9823-ENSSSCP00000005606"/>
<dbReference type="Ensembl" id="ENSSSCT00000034678.4">
    <property type="protein sequence ID" value="ENSSSCP00000029236.2"/>
    <property type="gene ID" value="ENSSSCG00000005215.6"/>
</dbReference>
<dbReference type="Ensembl" id="ENSSSCT00015085604.1">
    <property type="protein sequence ID" value="ENSSSCP00015034788.1"/>
    <property type="gene ID" value="ENSSSCG00015063581.1"/>
</dbReference>
<dbReference type="Ensembl" id="ENSSSCT00025050590.1">
    <property type="protein sequence ID" value="ENSSSCP00025021588.1"/>
    <property type="gene ID" value="ENSSSCG00025037142.1"/>
</dbReference>
<dbReference type="Ensembl" id="ENSSSCT00030072992.1">
    <property type="protein sequence ID" value="ENSSSCP00030033312.1"/>
    <property type="gene ID" value="ENSSSCG00030052311.1"/>
</dbReference>
<dbReference type="Ensembl" id="ENSSSCT00035024766.1">
    <property type="protein sequence ID" value="ENSSSCP00035009315.1"/>
    <property type="gene ID" value="ENSSSCG00035019132.1"/>
</dbReference>
<dbReference type="Ensembl" id="ENSSSCT00045055979.1">
    <property type="protein sequence ID" value="ENSSSCP00045039034.1"/>
    <property type="gene ID" value="ENSSSCG00045032577.1"/>
</dbReference>
<dbReference type="Ensembl" id="ENSSSCT00055036075.1">
    <property type="protein sequence ID" value="ENSSSCP00055028647.1"/>
    <property type="gene ID" value="ENSSSCG00055018283.1"/>
</dbReference>
<dbReference type="Ensembl" id="ENSSSCT00060087675.1">
    <property type="protein sequence ID" value="ENSSSCP00060037966.1"/>
    <property type="gene ID" value="ENSSSCG00060064055.1"/>
</dbReference>
<dbReference type="Ensembl" id="ENSSSCT00065098044.1">
    <property type="protein sequence ID" value="ENSSSCP00065042985.1"/>
    <property type="gene ID" value="ENSSSCG00065071184.1"/>
</dbReference>
<dbReference type="Ensembl" id="ENSSSCT00070059083.1">
    <property type="protein sequence ID" value="ENSSSCP00070050290.1"/>
    <property type="gene ID" value="ENSSSCG00070029405.1"/>
</dbReference>
<dbReference type="Ensembl" id="ENSSSCT00070059086.1">
    <property type="protein sequence ID" value="ENSSSCP00070050293.1"/>
    <property type="gene ID" value="ENSSSCG00070029405.1"/>
</dbReference>
<dbReference type="Ensembl" id="ENSSSCT00090047164">
    <property type="protein sequence ID" value="ENSSSCP00090029244"/>
    <property type="gene ID" value="ENSSSCG00090026671"/>
</dbReference>
<dbReference type="Ensembl" id="ENSSSCT00105034320">
    <property type="protein sequence ID" value="ENSSSCP00105023950"/>
    <property type="gene ID" value="ENSSSCG00105017824"/>
</dbReference>
<dbReference type="Ensembl" id="ENSSSCT00105034341">
    <property type="protein sequence ID" value="ENSSSCP00105023962"/>
    <property type="gene ID" value="ENSSSCG00105017824"/>
</dbReference>
<dbReference type="Ensembl" id="ENSSSCT00110002832">
    <property type="protein sequence ID" value="ENSSSCP00110002209"/>
    <property type="gene ID" value="ENSSSCG00110001374"/>
</dbReference>
<dbReference type="Ensembl" id="ENSSSCT00110002847">
    <property type="protein sequence ID" value="ENSSSCP00110002221"/>
    <property type="gene ID" value="ENSSSCG00110001374"/>
</dbReference>
<dbReference type="Ensembl" id="ENSSSCT00115008810">
    <property type="protein sequence ID" value="ENSSSCP00115008281"/>
    <property type="gene ID" value="ENSSSCG00115005099"/>
</dbReference>
<dbReference type="Ensembl" id="ENSSSCT00130050887">
    <property type="protein sequence ID" value="ENSSSCP00130036212"/>
    <property type="gene ID" value="ENSSSCG00130026130"/>
</dbReference>
<dbReference type="GeneID" id="397201"/>
<dbReference type="KEGG" id="ssc:397201"/>
<dbReference type="CTD" id="3717"/>
<dbReference type="VGNC" id="VGNC:89271">
    <property type="gene designation" value="JAK2"/>
</dbReference>
<dbReference type="eggNOG" id="KOG0197">
    <property type="taxonomic scope" value="Eukaryota"/>
</dbReference>
<dbReference type="GeneTree" id="ENSGT00940000155640"/>
<dbReference type="InParanoid" id="O19064"/>
<dbReference type="OMA" id="RCHNILV"/>
<dbReference type="OrthoDB" id="1915767at2759"/>
<dbReference type="Reactome" id="R-SSC-1059683">
    <property type="pathway name" value="Interleukin-6 signaling"/>
</dbReference>
<dbReference type="Reactome" id="R-SSC-112411">
    <property type="pathway name" value="MAPK1 (ERK2) activation"/>
</dbReference>
<dbReference type="Reactome" id="R-SSC-1170546">
    <property type="pathway name" value="Prolactin receptor signaling"/>
</dbReference>
<dbReference type="Reactome" id="R-SSC-1433557">
    <property type="pathway name" value="Signaling by SCF-KIT"/>
</dbReference>
<dbReference type="Reactome" id="R-SSC-512988">
    <property type="pathway name" value="Interleukin-3, Interleukin-5 and GM-CSF signaling"/>
</dbReference>
<dbReference type="Reactome" id="R-SSC-5673000">
    <property type="pathway name" value="RAF activation"/>
</dbReference>
<dbReference type="Reactome" id="R-SSC-5673001">
    <property type="pathway name" value="RAF/MAP kinase cascade"/>
</dbReference>
<dbReference type="Reactome" id="R-SSC-6785807">
    <property type="pathway name" value="Interleukin-4 and Interleukin-13 signaling"/>
</dbReference>
<dbReference type="Reactome" id="R-SSC-6788467">
    <property type="pathway name" value="IL-6-type cytokine receptor ligand interactions"/>
</dbReference>
<dbReference type="Reactome" id="R-SSC-69231">
    <property type="pathway name" value="Cyclin D associated events in G1"/>
</dbReference>
<dbReference type="Reactome" id="R-SSC-877300">
    <property type="pathway name" value="Interferon gamma signaling"/>
</dbReference>
<dbReference type="Reactome" id="R-SSC-877312">
    <property type="pathway name" value="Regulation of IFNG signaling"/>
</dbReference>
<dbReference type="Reactome" id="R-SSC-8854691">
    <property type="pathway name" value="Interleukin-20 family signaling"/>
</dbReference>
<dbReference type="Reactome" id="R-SSC-8984722">
    <property type="pathway name" value="Interleukin-35 Signalling"/>
</dbReference>
<dbReference type="Reactome" id="R-SSC-9006335">
    <property type="pathway name" value="Signaling by Erythropoietin"/>
</dbReference>
<dbReference type="Reactome" id="R-SSC-9020591">
    <property type="pathway name" value="Interleukin-12 signaling"/>
</dbReference>
<dbReference type="Reactome" id="R-SSC-9020933">
    <property type="pathway name" value="Interleukin-23 signaling"/>
</dbReference>
<dbReference type="Reactome" id="R-SSC-9020956">
    <property type="pathway name" value="Interleukin-27 signaling"/>
</dbReference>
<dbReference type="Reactome" id="R-SSC-9027276">
    <property type="pathway name" value="Erythropoietin activates Phosphoinositide-3-kinase (PI3K)"/>
</dbReference>
<dbReference type="Reactome" id="R-SSC-9027284">
    <property type="pathway name" value="Erythropoietin activates RAS"/>
</dbReference>
<dbReference type="Reactome" id="R-SSC-912526">
    <property type="pathway name" value="Interleukin receptor SHC signaling"/>
</dbReference>
<dbReference type="Reactome" id="R-SSC-9674555">
    <property type="pathway name" value="Signaling by CSF3 (G-CSF)"/>
</dbReference>
<dbReference type="Reactome" id="R-SSC-9705462">
    <property type="pathway name" value="Inactivation of CSF3 (G-CSF) signaling"/>
</dbReference>
<dbReference type="Reactome" id="R-SSC-9732724">
    <property type="pathway name" value="IFNG signaling activates MAPKs"/>
</dbReference>
<dbReference type="Reactome" id="R-SSC-982772">
    <property type="pathway name" value="Growth hormone receptor signaling"/>
</dbReference>
<dbReference type="Reactome" id="R-SSC-983231">
    <property type="pathway name" value="Factors involved in megakaryocyte development and platelet production"/>
</dbReference>
<dbReference type="ChiTaRS" id="JAK2">
    <property type="organism name" value="pig"/>
</dbReference>
<dbReference type="Proteomes" id="UP000008227">
    <property type="component" value="Chromosome 1"/>
</dbReference>
<dbReference type="Proteomes" id="UP000314985">
    <property type="component" value="Chromosome 1"/>
</dbReference>
<dbReference type="Proteomes" id="UP000694570">
    <property type="component" value="Unplaced"/>
</dbReference>
<dbReference type="Proteomes" id="UP000694571">
    <property type="component" value="Unplaced"/>
</dbReference>
<dbReference type="Proteomes" id="UP000694720">
    <property type="component" value="Unplaced"/>
</dbReference>
<dbReference type="Proteomes" id="UP000694722">
    <property type="component" value="Unplaced"/>
</dbReference>
<dbReference type="Proteomes" id="UP000694723">
    <property type="component" value="Unplaced"/>
</dbReference>
<dbReference type="Proteomes" id="UP000694724">
    <property type="component" value="Unplaced"/>
</dbReference>
<dbReference type="Proteomes" id="UP000694725">
    <property type="component" value="Unplaced"/>
</dbReference>
<dbReference type="Proteomes" id="UP000694726">
    <property type="component" value="Unplaced"/>
</dbReference>
<dbReference type="Proteomes" id="UP000694727">
    <property type="component" value="Unplaced"/>
</dbReference>
<dbReference type="Proteomes" id="UP000694728">
    <property type="component" value="Unplaced"/>
</dbReference>
<dbReference type="Bgee" id="ENSSSCG00000005215">
    <property type="expression patterns" value="Expressed in stomach and 44 other cell types or tissues"/>
</dbReference>
<dbReference type="ExpressionAtlas" id="O19064">
    <property type="expression patterns" value="baseline and differential"/>
</dbReference>
<dbReference type="GO" id="GO:0005901">
    <property type="term" value="C:caveola"/>
    <property type="evidence" value="ECO:0007669"/>
    <property type="project" value="Ensembl"/>
</dbReference>
<dbReference type="GO" id="GO:0005856">
    <property type="term" value="C:cytoskeleton"/>
    <property type="evidence" value="ECO:0007669"/>
    <property type="project" value="InterPro"/>
</dbReference>
<dbReference type="GO" id="GO:0005829">
    <property type="term" value="C:cytosol"/>
    <property type="evidence" value="ECO:0000318"/>
    <property type="project" value="GO_Central"/>
</dbReference>
<dbReference type="GO" id="GO:0012505">
    <property type="term" value="C:endomembrane system"/>
    <property type="evidence" value="ECO:0007669"/>
    <property type="project" value="UniProtKB-SubCell"/>
</dbReference>
<dbReference type="GO" id="GO:0031234">
    <property type="term" value="C:extrinsic component of cytoplasmic side of plasma membrane"/>
    <property type="evidence" value="ECO:0007669"/>
    <property type="project" value="Ensembl"/>
</dbReference>
<dbReference type="GO" id="GO:0005925">
    <property type="term" value="C:focal adhesion"/>
    <property type="evidence" value="ECO:0007669"/>
    <property type="project" value="Ensembl"/>
</dbReference>
<dbReference type="GO" id="GO:0030526">
    <property type="term" value="C:granulocyte macrophage colony-stimulating factor receptor complex"/>
    <property type="evidence" value="ECO:0007669"/>
    <property type="project" value="Ensembl"/>
</dbReference>
<dbReference type="GO" id="GO:0042022">
    <property type="term" value="C:interleukin-12 receptor complex"/>
    <property type="evidence" value="ECO:0007669"/>
    <property type="project" value="Ensembl"/>
</dbReference>
<dbReference type="GO" id="GO:0072536">
    <property type="term" value="C:interleukin-23 receptor complex"/>
    <property type="evidence" value="ECO:0007669"/>
    <property type="project" value="Ensembl"/>
</dbReference>
<dbReference type="GO" id="GO:0005654">
    <property type="term" value="C:nucleoplasm"/>
    <property type="evidence" value="ECO:0007669"/>
    <property type="project" value="Ensembl"/>
</dbReference>
<dbReference type="GO" id="GO:0005634">
    <property type="term" value="C:nucleus"/>
    <property type="evidence" value="ECO:0000250"/>
    <property type="project" value="UniProtKB"/>
</dbReference>
<dbReference type="GO" id="GO:0005524">
    <property type="term" value="F:ATP binding"/>
    <property type="evidence" value="ECO:0007669"/>
    <property type="project" value="UniProtKB-KW"/>
</dbReference>
<dbReference type="GO" id="GO:0005131">
    <property type="term" value="F:growth hormone receptor binding"/>
    <property type="evidence" value="ECO:0000318"/>
    <property type="project" value="GO_Central"/>
</dbReference>
<dbReference type="GO" id="GO:0020037">
    <property type="term" value="F:heme binding"/>
    <property type="evidence" value="ECO:0000250"/>
    <property type="project" value="UniProtKB"/>
</dbReference>
<dbReference type="GO" id="GO:0042393">
    <property type="term" value="F:histone binding"/>
    <property type="evidence" value="ECO:0007669"/>
    <property type="project" value="InterPro"/>
</dbReference>
<dbReference type="GO" id="GO:0035401">
    <property type="term" value="F:histone H3Y41 kinase activity"/>
    <property type="evidence" value="ECO:0000250"/>
    <property type="project" value="UniProtKB"/>
</dbReference>
<dbReference type="GO" id="GO:0042802">
    <property type="term" value="F:identical protein binding"/>
    <property type="evidence" value="ECO:0007669"/>
    <property type="project" value="Ensembl"/>
</dbReference>
<dbReference type="GO" id="GO:0005143">
    <property type="term" value="F:interleukin-12 receptor binding"/>
    <property type="evidence" value="ECO:0007669"/>
    <property type="project" value="Ensembl"/>
</dbReference>
<dbReference type="GO" id="GO:0046872">
    <property type="term" value="F:metal ion binding"/>
    <property type="evidence" value="ECO:0007669"/>
    <property type="project" value="UniProtKB-KW"/>
</dbReference>
<dbReference type="GO" id="GO:0004715">
    <property type="term" value="F:non-membrane spanning protein tyrosine kinase activity"/>
    <property type="evidence" value="ECO:0000318"/>
    <property type="project" value="GO_Central"/>
</dbReference>
<dbReference type="GO" id="GO:0019901">
    <property type="term" value="F:protein kinase binding"/>
    <property type="evidence" value="ECO:0007669"/>
    <property type="project" value="Ensembl"/>
</dbReference>
<dbReference type="GO" id="GO:0004713">
    <property type="term" value="F:protein tyrosine kinase activity"/>
    <property type="evidence" value="ECO:0000250"/>
    <property type="project" value="UniProtKB"/>
</dbReference>
<dbReference type="GO" id="GO:0042169">
    <property type="term" value="F:SH2 domain binding"/>
    <property type="evidence" value="ECO:0007669"/>
    <property type="project" value="Ensembl"/>
</dbReference>
<dbReference type="GO" id="GO:0030546">
    <property type="term" value="F:signaling receptor activator activity"/>
    <property type="evidence" value="ECO:0007669"/>
    <property type="project" value="Ensembl"/>
</dbReference>
<dbReference type="GO" id="GO:0042976">
    <property type="term" value="P:activation of Janus kinase activity"/>
    <property type="evidence" value="ECO:0000250"/>
    <property type="project" value="UniProtKB"/>
</dbReference>
<dbReference type="GO" id="GO:0002250">
    <property type="term" value="P:adaptive immune response"/>
    <property type="evidence" value="ECO:0007669"/>
    <property type="project" value="UniProtKB-KW"/>
</dbReference>
<dbReference type="GO" id="GO:0007155">
    <property type="term" value="P:cell adhesion"/>
    <property type="evidence" value="ECO:0007669"/>
    <property type="project" value="Ensembl"/>
</dbReference>
<dbReference type="GO" id="GO:0007259">
    <property type="term" value="P:cell surface receptor signaling pathway via JAK-STAT"/>
    <property type="evidence" value="ECO:0000318"/>
    <property type="project" value="GO_Central"/>
</dbReference>
<dbReference type="GO" id="GO:0071549">
    <property type="term" value="P:cellular response to dexamethasone stimulus"/>
    <property type="evidence" value="ECO:0007669"/>
    <property type="project" value="Ensembl"/>
</dbReference>
<dbReference type="GO" id="GO:0036016">
    <property type="term" value="P:cellular response to interleukin-3"/>
    <property type="evidence" value="ECO:0007669"/>
    <property type="project" value="Ensembl"/>
</dbReference>
<dbReference type="GO" id="GO:0038065">
    <property type="term" value="P:collagen-activated signaling pathway"/>
    <property type="evidence" value="ECO:0007669"/>
    <property type="project" value="Ensembl"/>
</dbReference>
<dbReference type="GO" id="GO:0019221">
    <property type="term" value="P:cytokine-mediated signaling pathway"/>
    <property type="evidence" value="ECO:0000250"/>
    <property type="project" value="UniProtKB"/>
</dbReference>
<dbReference type="GO" id="GO:0030218">
    <property type="term" value="P:erythrocyte differentiation"/>
    <property type="evidence" value="ECO:0000250"/>
    <property type="project" value="UniProtKB"/>
</dbReference>
<dbReference type="GO" id="GO:0038162">
    <property type="term" value="P:erythropoietin-mediated signaling pathway"/>
    <property type="evidence" value="ECO:0007669"/>
    <property type="project" value="Ensembl"/>
</dbReference>
<dbReference type="GO" id="GO:0097191">
    <property type="term" value="P:extrinsic apoptotic signaling pathway"/>
    <property type="evidence" value="ECO:0007669"/>
    <property type="project" value="Ensembl"/>
</dbReference>
<dbReference type="GO" id="GO:0038157">
    <property type="term" value="P:granulocyte-macrophage colony-stimulating factor signaling pathway"/>
    <property type="evidence" value="ECO:0007669"/>
    <property type="project" value="Ensembl"/>
</dbReference>
<dbReference type="GO" id="GO:0060397">
    <property type="term" value="P:growth hormone receptor signaling pathway via JAK-STAT"/>
    <property type="evidence" value="ECO:0000250"/>
    <property type="project" value="UniProtKB"/>
</dbReference>
<dbReference type="GO" id="GO:0045087">
    <property type="term" value="P:innate immune response"/>
    <property type="evidence" value="ECO:0007669"/>
    <property type="project" value="UniProtKB-KW"/>
</dbReference>
<dbReference type="GO" id="GO:0035722">
    <property type="term" value="P:interleukin-12-mediated signaling pathway"/>
    <property type="evidence" value="ECO:0007669"/>
    <property type="project" value="Ensembl"/>
</dbReference>
<dbReference type="GO" id="GO:0038155">
    <property type="term" value="P:interleukin-23-mediated signaling pathway"/>
    <property type="evidence" value="ECO:0007669"/>
    <property type="project" value="Ensembl"/>
</dbReference>
<dbReference type="GO" id="GO:0038156">
    <property type="term" value="P:interleukin-3-mediated signaling pathway"/>
    <property type="evidence" value="ECO:0007669"/>
    <property type="project" value="Ensembl"/>
</dbReference>
<dbReference type="GO" id="GO:0038043">
    <property type="term" value="P:interleukin-5-mediated signaling pathway"/>
    <property type="evidence" value="ECO:0007669"/>
    <property type="project" value="Ensembl"/>
</dbReference>
<dbReference type="GO" id="GO:0035556">
    <property type="term" value="P:intracellular signal transduction"/>
    <property type="evidence" value="ECO:0000318"/>
    <property type="project" value="GO_Central"/>
</dbReference>
<dbReference type="GO" id="GO:0031663">
    <property type="term" value="P:lipopolysaccharide-mediated signaling pathway"/>
    <property type="evidence" value="ECO:0007669"/>
    <property type="project" value="Ensembl"/>
</dbReference>
<dbReference type="GO" id="GO:0061180">
    <property type="term" value="P:mammary gland epithelium development"/>
    <property type="evidence" value="ECO:0007669"/>
    <property type="project" value="Ensembl"/>
</dbReference>
<dbReference type="GO" id="GO:0001774">
    <property type="term" value="P:microglial cell activation"/>
    <property type="evidence" value="ECO:0007669"/>
    <property type="project" value="Ensembl"/>
</dbReference>
<dbReference type="GO" id="GO:0043066">
    <property type="term" value="P:negative regulation of apoptotic process"/>
    <property type="evidence" value="ECO:0007669"/>
    <property type="project" value="Ensembl"/>
</dbReference>
<dbReference type="GO" id="GO:0008285">
    <property type="term" value="P:negative regulation of cell population proliferation"/>
    <property type="evidence" value="ECO:0007669"/>
    <property type="project" value="Ensembl"/>
</dbReference>
<dbReference type="GO" id="GO:1900016">
    <property type="term" value="P:negative regulation of cytokine production involved in inflammatory response"/>
    <property type="evidence" value="ECO:0007669"/>
    <property type="project" value="Ensembl"/>
</dbReference>
<dbReference type="GO" id="GO:2001235">
    <property type="term" value="P:positive regulation of apoptotic signaling pathway"/>
    <property type="evidence" value="ECO:0007669"/>
    <property type="project" value="Ensembl"/>
</dbReference>
<dbReference type="GO" id="GO:0010811">
    <property type="term" value="P:positive regulation of cell-substrate adhesion"/>
    <property type="evidence" value="ECO:0007669"/>
    <property type="project" value="Ensembl"/>
</dbReference>
<dbReference type="GO" id="GO:0120162">
    <property type="term" value="P:positive regulation of cold-induced thermogenesis"/>
    <property type="evidence" value="ECO:0007669"/>
    <property type="project" value="Ensembl"/>
</dbReference>
<dbReference type="GO" id="GO:0060399">
    <property type="term" value="P:positive regulation of growth hormone receptor signaling pathway"/>
    <property type="evidence" value="ECO:0007669"/>
    <property type="project" value="Ensembl"/>
</dbReference>
<dbReference type="GO" id="GO:0032731">
    <property type="term" value="P:positive regulation of interleukin-1 beta production"/>
    <property type="evidence" value="ECO:0007669"/>
    <property type="project" value="Ensembl"/>
</dbReference>
<dbReference type="GO" id="GO:0045348">
    <property type="term" value="P:positive regulation of MHC class II biosynthetic process"/>
    <property type="evidence" value="ECO:0007669"/>
    <property type="project" value="Ensembl"/>
</dbReference>
<dbReference type="GO" id="GO:0032819">
    <property type="term" value="P:positive regulation of natural killer cell proliferation"/>
    <property type="evidence" value="ECO:0007669"/>
    <property type="project" value="Ensembl"/>
</dbReference>
<dbReference type="GO" id="GO:0051142">
    <property type="term" value="P:positive regulation of NK T cell proliferation"/>
    <property type="evidence" value="ECO:0007669"/>
    <property type="project" value="Ensembl"/>
</dbReference>
<dbReference type="GO" id="GO:0051897">
    <property type="term" value="P:positive regulation of phosphatidylinositol 3-kinase/protein kinase B signal transduction"/>
    <property type="evidence" value="ECO:0007669"/>
    <property type="project" value="Ensembl"/>
</dbReference>
<dbReference type="GO" id="GO:0010572">
    <property type="term" value="P:positive regulation of platelet activation"/>
    <property type="evidence" value="ECO:0007669"/>
    <property type="project" value="Ensembl"/>
</dbReference>
<dbReference type="GO" id="GO:1901731">
    <property type="term" value="P:positive regulation of platelet aggregation"/>
    <property type="evidence" value="ECO:0007669"/>
    <property type="project" value="Ensembl"/>
</dbReference>
<dbReference type="GO" id="GO:0060391">
    <property type="term" value="P:positive regulation of SMAD protein signal transduction"/>
    <property type="evidence" value="ECO:0007669"/>
    <property type="project" value="Ensembl"/>
</dbReference>
<dbReference type="GO" id="GO:0045944">
    <property type="term" value="P:positive regulation of transcription by RNA polymerase II"/>
    <property type="evidence" value="ECO:0007669"/>
    <property type="project" value="Ensembl"/>
</dbReference>
<dbReference type="GO" id="GO:0032760">
    <property type="term" value="P:positive regulation of tumor necrosis factor production"/>
    <property type="evidence" value="ECO:0007669"/>
    <property type="project" value="Ensembl"/>
</dbReference>
<dbReference type="GO" id="GO:0032729">
    <property type="term" value="P:positive regulation of type II interferon production"/>
    <property type="evidence" value="ECO:0007669"/>
    <property type="project" value="Ensembl"/>
</dbReference>
<dbReference type="GO" id="GO:0042531">
    <property type="term" value="P:positive regulation of tyrosine phosphorylation of STAT protein"/>
    <property type="evidence" value="ECO:0000250"/>
    <property type="project" value="UniProtKB"/>
</dbReference>
<dbReference type="GO" id="GO:0035166">
    <property type="term" value="P:post-embryonic hemopoiesis"/>
    <property type="evidence" value="ECO:0007669"/>
    <property type="project" value="Ensembl"/>
</dbReference>
<dbReference type="GO" id="GO:0043687">
    <property type="term" value="P:post-translational protein modification"/>
    <property type="evidence" value="ECO:0000250"/>
    <property type="project" value="UniProtKB"/>
</dbReference>
<dbReference type="GO" id="GO:0046777">
    <property type="term" value="P:protein autophosphorylation"/>
    <property type="evidence" value="ECO:0000250"/>
    <property type="project" value="UniProtKB"/>
</dbReference>
<dbReference type="GO" id="GO:0042981">
    <property type="term" value="P:regulation of apoptotic process"/>
    <property type="evidence" value="ECO:0000318"/>
    <property type="project" value="GO_Central"/>
</dbReference>
<dbReference type="GO" id="GO:0050727">
    <property type="term" value="P:regulation of inflammatory response"/>
    <property type="evidence" value="ECO:0007669"/>
    <property type="project" value="Ensembl"/>
</dbReference>
<dbReference type="GO" id="GO:0046677">
    <property type="term" value="P:response to antibiotic"/>
    <property type="evidence" value="ECO:0007669"/>
    <property type="project" value="Ensembl"/>
</dbReference>
<dbReference type="GO" id="GO:0007165">
    <property type="term" value="P:signal transduction"/>
    <property type="evidence" value="ECO:0000250"/>
    <property type="project" value="UniProtKB"/>
</dbReference>
<dbReference type="GO" id="GO:0034050">
    <property type="term" value="P:symbiont-induced defense-related programmed cell death"/>
    <property type="evidence" value="ECO:0007669"/>
    <property type="project" value="Ensembl"/>
</dbReference>
<dbReference type="GO" id="GO:0038163">
    <property type="term" value="P:thrombopoietin-mediated signaling pathway"/>
    <property type="evidence" value="ECO:0007669"/>
    <property type="project" value="Ensembl"/>
</dbReference>
<dbReference type="GO" id="GO:0006366">
    <property type="term" value="P:transcription by RNA polymerase II"/>
    <property type="evidence" value="ECO:0007669"/>
    <property type="project" value="Ensembl"/>
</dbReference>
<dbReference type="GO" id="GO:0033209">
    <property type="term" value="P:tumor necrosis factor-mediated signaling pathway"/>
    <property type="evidence" value="ECO:0007669"/>
    <property type="project" value="Ensembl"/>
</dbReference>
<dbReference type="CDD" id="cd14473">
    <property type="entry name" value="FERM_B-lobe"/>
    <property type="match status" value="1"/>
</dbReference>
<dbReference type="CDD" id="cd13333">
    <property type="entry name" value="FERM_C_JAK2"/>
    <property type="match status" value="1"/>
</dbReference>
<dbReference type="CDD" id="cd05078">
    <property type="entry name" value="PTK_Jak2_rpt1"/>
    <property type="match status" value="1"/>
</dbReference>
<dbReference type="CDD" id="cd14205">
    <property type="entry name" value="PTKc_Jak2_rpt2"/>
    <property type="match status" value="1"/>
</dbReference>
<dbReference type="CDD" id="cd10379">
    <property type="entry name" value="SH2_Jak2"/>
    <property type="match status" value="1"/>
</dbReference>
<dbReference type="FunFam" id="1.10.510.10:FF:000110">
    <property type="entry name" value="Tyrosine-protein kinase"/>
    <property type="match status" value="1"/>
</dbReference>
<dbReference type="FunFam" id="2.30.29.30:FF:000177">
    <property type="entry name" value="Tyrosine-protein kinase"/>
    <property type="match status" value="1"/>
</dbReference>
<dbReference type="FunFam" id="3.30.200.20:FF:000084">
    <property type="entry name" value="Tyrosine-protein kinase"/>
    <property type="match status" value="1"/>
</dbReference>
<dbReference type="FunFam" id="3.30.200.20:FF:000135">
    <property type="entry name" value="Tyrosine-protein kinase"/>
    <property type="match status" value="1"/>
</dbReference>
<dbReference type="FunFam" id="3.30.505.10:FF:000037">
    <property type="entry name" value="Tyrosine-protein kinase"/>
    <property type="match status" value="1"/>
</dbReference>
<dbReference type="FunFam" id="1.10.510.10:FF:000114">
    <property type="entry name" value="Tyrosine-protein kinase JAK2"/>
    <property type="match status" value="1"/>
</dbReference>
<dbReference type="Gene3D" id="3.30.200.20">
    <property type="entry name" value="Phosphorylase Kinase, domain 1"/>
    <property type="match status" value="2"/>
</dbReference>
<dbReference type="Gene3D" id="2.30.29.30">
    <property type="entry name" value="Pleckstrin-homology domain (PH domain)/Phosphotyrosine-binding domain (PTB)"/>
    <property type="match status" value="1"/>
</dbReference>
<dbReference type="Gene3D" id="3.30.505.10">
    <property type="entry name" value="SH2 domain"/>
    <property type="match status" value="1"/>
</dbReference>
<dbReference type="Gene3D" id="1.10.510.10">
    <property type="entry name" value="Transferase(Phosphotransferase) domain 1"/>
    <property type="match status" value="2"/>
</dbReference>
<dbReference type="InterPro" id="IPR019749">
    <property type="entry name" value="Band_41_domain"/>
</dbReference>
<dbReference type="InterPro" id="IPR035963">
    <property type="entry name" value="FERM_2"/>
</dbReference>
<dbReference type="InterPro" id="IPR019748">
    <property type="entry name" value="FERM_central"/>
</dbReference>
<dbReference type="InterPro" id="IPR000299">
    <property type="entry name" value="FERM_domain"/>
</dbReference>
<dbReference type="InterPro" id="IPR041155">
    <property type="entry name" value="FERM_F1"/>
</dbReference>
<dbReference type="InterPro" id="IPR041046">
    <property type="entry name" value="FERM_F2"/>
</dbReference>
<dbReference type="InterPro" id="IPR051286">
    <property type="entry name" value="JAK"/>
</dbReference>
<dbReference type="InterPro" id="IPR041381">
    <property type="entry name" value="JAK1-3/TYK2_PHL_dom"/>
</dbReference>
<dbReference type="InterPro" id="IPR037838">
    <property type="entry name" value="JAK2_FERM_C-lobe"/>
</dbReference>
<dbReference type="InterPro" id="IPR035860">
    <property type="entry name" value="JAK2_SH2"/>
</dbReference>
<dbReference type="InterPro" id="IPR011009">
    <property type="entry name" value="Kinase-like_dom_sf"/>
</dbReference>
<dbReference type="InterPro" id="IPR011993">
    <property type="entry name" value="PH-like_dom_sf"/>
</dbReference>
<dbReference type="InterPro" id="IPR000719">
    <property type="entry name" value="Prot_kinase_dom"/>
</dbReference>
<dbReference type="InterPro" id="IPR017441">
    <property type="entry name" value="Protein_kinase_ATP_BS"/>
</dbReference>
<dbReference type="InterPro" id="IPR035588">
    <property type="entry name" value="PTK_Jak2_rpt1"/>
</dbReference>
<dbReference type="InterPro" id="IPR035589">
    <property type="entry name" value="PTKc_Jak2_rpt2"/>
</dbReference>
<dbReference type="InterPro" id="IPR001245">
    <property type="entry name" value="Ser-Thr/Tyr_kinase_cat_dom"/>
</dbReference>
<dbReference type="InterPro" id="IPR000980">
    <property type="entry name" value="SH2"/>
</dbReference>
<dbReference type="InterPro" id="IPR036860">
    <property type="entry name" value="SH2_dom_sf"/>
</dbReference>
<dbReference type="InterPro" id="IPR008266">
    <property type="entry name" value="Tyr_kinase_AS"/>
</dbReference>
<dbReference type="InterPro" id="IPR020635">
    <property type="entry name" value="Tyr_kinase_cat_dom"/>
</dbReference>
<dbReference type="InterPro" id="IPR016251">
    <property type="entry name" value="Tyr_kinase_non-rcpt_Jak/Tyk2"/>
</dbReference>
<dbReference type="InterPro" id="IPR020693">
    <property type="entry name" value="Tyr_kinase_non-rcpt_Jak2"/>
</dbReference>
<dbReference type="PANTHER" id="PTHR45807">
    <property type="entry name" value="TYROSINE-PROTEIN KINASE HOPSCOTCH"/>
    <property type="match status" value="1"/>
</dbReference>
<dbReference type="PANTHER" id="PTHR45807:SF1">
    <property type="entry name" value="TYROSINE-PROTEIN KINASE JAK2"/>
    <property type="match status" value="1"/>
</dbReference>
<dbReference type="Pfam" id="PF18379">
    <property type="entry name" value="FERM_F1"/>
    <property type="match status" value="1"/>
</dbReference>
<dbReference type="Pfam" id="PF18377">
    <property type="entry name" value="FERM_F2"/>
    <property type="match status" value="1"/>
</dbReference>
<dbReference type="Pfam" id="PF17887">
    <property type="entry name" value="Jak1_Phl"/>
    <property type="match status" value="1"/>
</dbReference>
<dbReference type="Pfam" id="PF07714">
    <property type="entry name" value="PK_Tyr_Ser-Thr"/>
    <property type="match status" value="2"/>
</dbReference>
<dbReference type="Pfam" id="PF21990">
    <property type="entry name" value="SH2_1"/>
    <property type="match status" value="1"/>
</dbReference>
<dbReference type="PIRSF" id="PIRSF000636">
    <property type="entry name" value="TyrPK_Jak"/>
    <property type="match status" value="1"/>
</dbReference>
<dbReference type="PRINTS" id="PR01823">
    <property type="entry name" value="JANUSKINASE"/>
</dbReference>
<dbReference type="PRINTS" id="PR01825">
    <property type="entry name" value="JANUSKINASE2"/>
</dbReference>
<dbReference type="PRINTS" id="PR00109">
    <property type="entry name" value="TYRKINASE"/>
</dbReference>
<dbReference type="SMART" id="SM00295">
    <property type="entry name" value="B41"/>
    <property type="match status" value="1"/>
</dbReference>
<dbReference type="SMART" id="SM00252">
    <property type="entry name" value="SH2"/>
    <property type="match status" value="1"/>
</dbReference>
<dbReference type="SMART" id="SM00219">
    <property type="entry name" value="TyrKc"/>
    <property type="match status" value="2"/>
</dbReference>
<dbReference type="SUPFAM" id="SSF50729">
    <property type="entry name" value="PH domain-like"/>
    <property type="match status" value="1"/>
</dbReference>
<dbReference type="SUPFAM" id="SSF56112">
    <property type="entry name" value="Protein kinase-like (PK-like)"/>
    <property type="match status" value="2"/>
</dbReference>
<dbReference type="SUPFAM" id="SSF47031">
    <property type="entry name" value="Second domain of FERM"/>
    <property type="match status" value="1"/>
</dbReference>
<dbReference type="SUPFAM" id="SSF55550">
    <property type="entry name" value="SH2 domain"/>
    <property type="match status" value="1"/>
</dbReference>
<dbReference type="PROSITE" id="PS50057">
    <property type="entry name" value="FERM_3"/>
    <property type="match status" value="1"/>
</dbReference>
<dbReference type="PROSITE" id="PS00107">
    <property type="entry name" value="PROTEIN_KINASE_ATP"/>
    <property type="match status" value="1"/>
</dbReference>
<dbReference type="PROSITE" id="PS50011">
    <property type="entry name" value="PROTEIN_KINASE_DOM"/>
    <property type="match status" value="2"/>
</dbReference>
<dbReference type="PROSITE" id="PS00109">
    <property type="entry name" value="PROTEIN_KINASE_TYR"/>
    <property type="match status" value="1"/>
</dbReference>
<dbReference type="PROSITE" id="PS50001">
    <property type="entry name" value="SH2"/>
    <property type="match status" value="1"/>
</dbReference>
<accession>O19064</accession>
<name>JAK2_PIG</name>
<evidence type="ECO:0000250" key="1"/>
<evidence type="ECO:0000250" key="2">
    <source>
        <dbReference type="UniProtKB" id="O60674"/>
    </source>
</evidence>
<evidence type="ECO:0000250" key="3">
    <source>
        <dbReference type="UniProtKB" id="Q62120"/>
    </source>
</evidence>
<evidence type="ECO:0000255" key="4">
    <source>
        <dbReference type="PROSITE-ProRule" id="PRU00084"/>
    </source>
</evidence>
<evidence type="ECO:0000255" key="5">
    <source>
        <dbReference type="PROSITE-ProRule" id="PRU00159"/>
    </source>
</evidence>
<evidence type="ECO:0000255" key="6">
    <source>
        <dbReference type="PROSITE-ProRule" id="PRU00191"/>
    </source>
</evidence>
<evidence type="ECO:0000255" key="7">
    <source>
        <dbReference type="PROSITE-ProRule" id="PRU10028"/>
    </source>
</evidence>
<evidence type="ECO:0000305" key="8"/>
<keyword id="KW-1064">Adaptive immunity</keyword>
<keyword id="KW-0067">ATP-binding</keyword>
<keyword id="KW-0156">Chromatin regulator</keyword>
<keyword id="KW-0963">Cytoplasm</keyword>
<keyword id="KW-0391">Immunity</keyword>
<keyword id="KW-0399">Innate immunity</keyword>
<keyword id="KW-0418">Kinase</keyword>
<keyword id="KW-0460">Magnesium</keyword>
<keyword id="KW-0472">Membrane</keyword>
<keyword id="KW-0479">Metal-binding</keyword>
<keyword id="KW-0547">Nucleotide-binding</keyword>
<keyword id="KW-0539">Nucleus</keyword>
<keyword id="KW-0597">Phosphoprotein</keyword>
<keyword id="KW-1185">Reference proteome</keyword>
<keyword id="KW-0677">Repeat</keyword>
<keyword id="KW-0727">SH2 domain</keyword>
<keyword id="KW-0808">Transferase</keyword>
<keyword id="KW-0829">Tyrosine-protein kinase</keyword>
<keyword id="KW-0832">Ubl conjugation</keyword>
<gene>
    <name evidence="2" type="primary">JAK2</name>
</gene>
<proteinExistence type="evidence at transcript level"/>
<organism>
    <name type="scientific">Sus scrofa</name>
    <name type="common">Pig</name>
    <dbReference type="NCBI Taxonomy" id="9823"/>
    <lineage>
        <taxon>Eukaryota</taxon>
        <taxon>Metazoa</taxon>
        <taxon>Chordata</taxon>
        <taxon>Craniata</taxon>
        <taxon>Vertebrata</taxon>
        <taxon>Euteleostomi</taxon>
        <taxon>Mammalia</taxon>
        <taxon>Eutheria</taxon>
        <taxon>Laurasiatheria</taxon>
        <taxon>Artiodactyla</taxon>
        <taxon>Suina</taxon>
        <taxon>Suidae</taxon>
        <taxon>Sus</taxon>
    </lineage>
</organism>
<feature type="chain" id="PRO_0000324093" description="Tyrosine-protein kinase JAK2">
    <location>
        <begin position="1"/>
        <end position="1131"/>
    </location>
</feature>
<feature type="domain" description="FERM" evidence="4">
    <location>
        <begin position="37"/>
        <end position="380"/>
    </location>
</feature>
<feature type="domain" description="SH2; atypical" evidence="6">
    <location>
        <begin position="401"/>
        <end position="482"/>
    </location>
</feature>
<feature type="domain" description="Protein kinase 1" evidence="5">
    <location>
        <begin position="545"/>
        <end position="809"/>
    </location>
</feature>
<feature type="domain" description="Protein kinase 2" evidence="5">
    <location>
        <begin position="849"/>
        <end position="1126"/>
    </location>
</feature>
<feature type="region of interest" description="Interaction with cytokine/interferon/growth hormone receptors" evidence="1">
    <location>
        <begin position="1"/>
        <end position="239"/>
    </location>
</feature>
<feature type="active site" description="Proton acceptor" evidence="5 7">
    <location>
        <position position="976"/>
    </location>
</feature>
<feature type="binding site" evidence="5">
    <location>
        <begin position="855"/>
        <end position="863"/>
    </location>
    <ligand>
        <name>ATP</name>
        <dbReference type="ChEBI" id="CHEBI:30616"/>
    </ligand>
</feature>
<feature type="binding site" evidence="5">
    <location>
        <position position="882"/>
    </location>
    <ligand>
        <name>ATP</name>
        <dbReference type="ChEBI" id="CHEBI:30616"/>
    </ligand>
</feature>
<feature type="modified residue" description="Phosphotyrosine; by autocatalysis" evidence="3">
    <location>
        <position position="119"/>
    </location>
</feature>
<feature type="modified residue" description="Phosphotyrosine" evidence="3">
    <location>
        <position position="372"/>
    </location>
</feature>
<feature type="modified residue" description="Phosphotyrosine" evidence="3">
    <location>
        <position position="373"/>
    </location>
</feature>
<feature type="modified residue" description="Phosphoserine" evidence="3">
    <location>
        <position position="523"/>
    </location>
</feature>
<feature type="modified residue" description="Phosphotyrosine" evidence="2">
    <location>
        <position position="570"/>
    </location>
</feature>
<feature type="modified residue" description="Phosphotyrosine" evidence="3">
    <location>
        <position position="813"/>
    </location>
</feature>
<feature type="modified residue" description="Phosphotyrosine; by autocatalysis" evidence="3">
    <location>
        <position position="868"/>
    </location>
</feature>
<feature type="modified residue" description="Phosphotyrosine; by autocatalysis" evidence="3">
    <location>
        <position position="966"/>
    </location>
</feature>
<feature type="modified residue" description="Phosphotyrosine; by autocatalysis" evidence="3">
    <location>
        <position position="972"/>
    </location>
</feature>
<feature type="modified residue" description="Phosphotyrosine; by autocatalysis" evidence="2">
    <location>
        <position position="1007"/>
    </location>
</feature>
<feature type="modified residue" description="Phosphotyrosine; by autocatalysis" evidence="2">
    <location>
        <position position="1008"/>
    </location>
</feature>
<reference key="1">
    <citation type="submission" date="1997-07" db="EMBL/GenBank/DDBJ databases">
        <title>Domestic pig mRNA for JAK2, complete cds.</title>
        <authorList>
            <person name="Ito Y."/>
            <person name="Mikawa S."/>
            <person name="Kobayashi E."/>
            <person name="Wada Y."/>
            <person name="Minezawa M."/>
        </authorList>
    </citation>
    <scope>NUCLEOTIDE SEQUENCE [MRNA]</scope>
    <source>
        <tissue>Muscle</tissue>
    </source>
</reference>